<accession>P59675</accession>
<reference key="1">
    <citation type="journal article" date="2002" name="Nucleic Acids Res.">
        <title>Genome sequence of Shigella flexneri 2a: insights into pathogenicity through comparison with genomes of Escherichia coli K12 and O157.</title>
        <authorList>
            <person name="Jin Q."/>
            <person name="Yuan Z."/>
            <person name="Xu J."/>
            <person name="Wang Y."/>
            <person name="Shen Y."/>
            <person name="Lu W."/>
            <person name="Wang J."/>
            <person name="Liu H."/>
            <person name="Yang J."/>
            <person name="Yang F."/>
            <person name="Zhang X."/>
            <person name="Zhang J."/>
            <person name="Yang G."/>
            <person name="Wu H."/>
            <person name="Qu D."/>
            <person name="Dong J."/>
            <person name="Sun L."/>
            <person name="Xue Y."/>
            <person name="Zhao A."/>
            <person name="Gao Y."/>
            <person name="Zhu J."/>
            <person name="Kan B."/>
            <person name="Ding K."/>
            <person name="Chen S."/>
            <person name="Cheng H."/>
            <person name="Yao Z."/>
            <person name="He B."/>
            <person name="Chen R."/>
            <person name="Ma D."/>
            <person name="Qiang B."/>
            <person name="Wen Y."/>
            <person name="Hou Y."/>
            <person name="Yu J."/>
        </authorList>
    </citation>
    <scope>NUCLEOTIDE SEQUENCE [LARGE SCALE GENOMIC DNA]</scope>
    <source>
        <strain>301 / Serotype 2a</strain>
    </source>
</reference>
<reference key="2">
    <citation type="journal article" date="2003" name="Infect. Immun.">
        <title>Complete genome sequence and comparative genomics of Shigella flexneri serotype 2a strain 2457T.</title>
        <authorList>
            <person name="Wei J."/>
            <person name="Goldberg M.B."/>
            <person name="Burland V."/>
            <person name="Venkatesan M.M."/>
            <person name="Deng W."/>
            <person name="Fournier G."/>
            <person name="Mayhew G.F."/>
            <person name="Plunkett G. III"/>
            <person name="Rose D.J."/>
            <person name="Darling A."/>
            <person name="Mau B."/>
            <person name="Perna N.T."/>
            <person name="Payne S.M."/>
            <person name="Runyen-Janecky L.J."/>
            <person name="Zhou S."/>
            <person name="Schwartz D.C."/>
            <person name="Blattner F.R."/>
        </authorList>
    </citation>
    <scope>NUCLEOTIDE SEQUENCE [LARGE SCALE GENOMIC DNA]</scope>
    <source>
        <strain>ATCC 700930 / 2457T / Serotype 2a</strain>
    </source>
</reference>
<name>FIXB_SHIFL</name>
<keyword id="KW-0249">Electron transport</keyword>
<keyword id="KW-0274">FAD</keyword>
<keyword id="KW-0285">Flavoprotein</keyword>
<keyword id="KW-1185">Reference proteome</keyword>
<keyword id="KW-0813">Transport</keyword>
<sequence length="313" mass="33483">MNTFSQVWVFSDTPSRLPELMNGAQALANQINAFVLNDADGAQAIQLGANHVWKLNGKPDDRMIEDYAGVMADTIRQHGADGLVLLPNTRRGKLLAAKLGYRLKAAVSNDASTVSVQDGKATVKHMVYGGLAIGEERIATPYAVLTISSGTFDAAQPDASRTGETHTVEWQAPAVAITRTATQARQSNSVDLDKARLVVSVGRGIGSKENIALAEQLCKAIGAELACSRPVAENEKWMEHERYVGISNLMLKPELYLAVGISGQIQHMVGANASQTIFAINKDKNAPIFQYADYGIVGDAVKILPALTAALAR</sequence>
<protein>
    <recommendedName>
        <fullName evidence="1">Protein FixB</fullName>
    </recommendedName>
</protein>
<dbReference type="EMBL" id="AE005674">
    <property type="protein sequence ID" value="AAN41705.1"/>
    <property type="status" value="ALT_SEQ"/>
    <property type="molecule type" value="Genomic_DNA"/>
</dbReference>
<dbReference type="EMBL" id="AE014073">
    <property type="status" value="NOT_ANNOTATED_CDS"/>
    <property type="molecule type" value="Genomic_DNA"/>
</dbReference>
<dbReference type="RefSeq" id="NP_705998.1">
    <property type="nucleotide sequence ID" value="NC_004337.2"/>
</dbReference>
<dbReference type="RefSeq" id="WP_001091480.1">
    <property type="nucleotide sequence ID" value="NZ_UGYT01000001.1"/>
</dbReference>
<dbReference type="SMR" id="P59675"/>
<dbReference type="STRING" id="198214.SF0039"/>
<dbReference type="PaxDb" id="198214-SF0039"/>
<dbReference type="GeneID" id="1025953"/>
<dbReference type="KEGG" id="sfl:SF0039"/>
<dbReference type="PATRIC" id="fig|198214.7.peg.46"/>
<dbReference type="HOGENOM" id="CLU_034178_0_1_6"/>
<dbReference type="UniPathway" id="UPA00117"/>
<dbReference type="Proteomes" id="UP000001006">
    <property type="component" value="Chromosome"/>
</dbReference>
<dbReference type="Proteomes" id="UP000002673">
    <property type="component" value="Chromosome"/>
</dbReference>
<dbReference type="GO" id="GO:0009055">
    <property type="term" value="F:electron transfer activity"/>
    <property type="evidence" value="ECO:0007669"/>
    <property type="project" value="InterPro"/>
</dbReference>
<dbReference type="GO" id="GO:0050660">
    <property type="term" value="F:flavin adenine dinucleotide binding"/>
    <property type="evidence" value="ECO:0007669"/>
    <property type="project" value="InterPro"/>
</dbReference>
<dbReference type="GO" id="GO:0009437">
    <property type="term" value="P:carnitine metabolic process"/>
    <property type="evidence" value="ECO:0007669"/>
    <property type="project" value="UniProtKB-UniRule"/>
</dbReference>
<dbReference type="GO" id="GO:0033539">
    <property type="term" value="P:fatty acid beta-oxidation using acyl-CoA dehydrogenase"/>
    <property type="evidence" value="ECO:0007669"/>
    <property type="project" value="TreeGrafter"/>
</dbReference>
<dbReference type="FunFam" id="3.40.50.1220:FF:000004">
    <property type="entry name" value="Electron transfer flavoprotein"/>
    <property type="match status" value="1"/>
</dbReference>
<dbReference type="FunFam" id="3.40.50.620:FF:000067">
    <property type="entry name" value="Protein FixB"/>
    <property type="match status" value="1"/>
</dbReference>
<dbReference type="Gene3D" id="3.40.50.620">
    <property type="entry name" value="HUPs"/>
    <property type="match status" value="1"/>
</dbReference>
<dbReference type="Gene3D" id="3.40.50.1220">
    <property type="entry name" value="TPP-binding domain"/>
    <property type="match status" value="1"/>
</dbReference>
<dbReference type="HAMAP" id="MF_01056">
    <property type="entry name" value="FixB"/>
    <property type="match status" value="1"/>
</dbReference>
<dbReference type="InterPro" id="IPR029035">
    <property type="entry name" value="DHS-like_NAD/FAD-binding_dom"/>
</dbReference>
<dbReference type="InterPro" id="IPR014730">
    <property type="entry name" value="ETF_a/b_N"/>
</dbReference>
<dbReference type="InterPro" id="IPR001308">
    <property type="entry name" value="ETF_a/FixB"/>
</dbReference>
<dbReference type="InterPro" id="IPR014731">
    <property type="entry name" value="ETF_asu_C"/>
</dbReference>
<dbReference type="InterPro" id="IPR018206">
    <property type="entry name" value="ETF_asu_C_CS"/>
</dbReference>
<dbReference type="InterPro" id="IPR023461">
    <property type="entry name" value="FixB"/>
</dbReference>
<dbReference type="InterPro" id="IPR014729">
    <property type="entry name" value="Rossmann-like_a/b/a_fold"/>
</dbReference>
<dbReference type="NCBIfam" id="NF002889">
    <property type="entry name" value="PRK03363.1"/>
    <property type="match status" value="1"/>
</dbReference>
<dbReference type="PANTHER" id="PTHR43153">
    <property type="entry name" value="ELECTRON TRANSFER FLAVOPROTEIN ALPHA"/>
    <property type="match status" value="1"/>
</dbReference>
<dbReference type="PANTHER" id="PTHR43153:SF5">
    <property type="entry name" value="PROTEIN FIXB-RELATED"/>
    <property type="match status" value="1"/>
</dbReference>
<dbReference type="Pfam" id="PF01012">
    <property type="entry name" value="ETF"/>
    <property type="match status" value="1"/>
</dbReference>
<dbReference type="Pfam" id="PF00766">
    <property type="entry name" value="ETF_alpha"/>
    <property type="match status" value="1"/>
</dbReference>
<dbReference type="PIRSF" id="PIRSF000089">
    <property type="entry name" value="Electra_flavoP_a"/>
    <property type="match status" value="1"/>
</dbReference>
<dbReference type="SMART" id="SM00893">
    <property type="entry name" value="ETF"/>
    <property type="match status" value="1"/>
</dbReference>
<dbReference type="SUPFAM" id="SSF52402">
    <property type="entry name" value="Adenine nucleotide alpha hydrolases-like"/>
    <property type="match status" value="1"/>
</dbReference>
<dbReference type="SUPFAM" id="SSF52467">
    <property type="entry name" value="DHS-like NAD/FAD-binding domain"/>
    <property type="match status" value="1"/>
</dbReference>
<dbReference type="PROSITE" id="PS00696">
    <property type="entry name" value="ETF_ALPHA"/>
    <property type="match status" value="1"/>
</dbReference>
<evidence type="ECO:0000255" key="1">
    <source>
        <dbReference type="HAMAP-Rule" id="MF_01056"/>
    </source>
</evidence>
<evidence type="ECO:0000305" key="2"/>
<feature type="chain" id="PRO_0000167867" description="Protein FixB">
    <location>
        <begin position="1"/>
        <end position="313"/>
    </location>
</feature>
<feature type="binding site" evidence="1">
    <location>
        <begin position="255"/>
        <end position="283"/>
    </location>
    <ligand>
        <name>FAD</name>
        <dbReference type="ChEBI" id="CHEBI:57692"/>
    </ligand>
</feature>
<proteinExistence type="inferred from homology"/>
<organism>
    <name type="scientific">Shigella flexneri</name>
    <dbReference type="NCBI Taxonomy" id="623"/>
    <lineage>
        <taxon>Bacteria</taxon>
        <taxon>Pseudomonadati</taxon>
        <taxon>Pseudomonadota</taxon>
        <taxon>Gammaproteobacteria</taxon>
        <taxon>Enterobacterales</taxon>
        <taxon>Enterobacteriaceae</taxon>
        <taxon>Shigella</taxon>
    </lineage>
</organism>
<gene>
    <name evidence="1" type="primary">fixB</name>
    <name type="ordered locus">SF0039</name>
    <name type="ordered locus">S0041</name>
</gene>
<comment type="function">
    <text evidence="1">Required for anaerobic carnitine reduction. May bring reductant to CaiA.</text>
</comment>
<comment type="pathway">
    <text evidence="1">Amine and polyamine metabolism; carnitine metabolism.</text>
</comment>
<comment type="subunit">
    <text evidence="1">Heterodimer of FixA and FixB.</text>
</comment>
<comment type="similarity">
    <text evidence="1">Belongs to the ETF alpha-subunit/FixB family.</text>
</comment>
<comment type="sequence caution" evidence="2">
    <conflict type="erroneous termination">
        <sequence resource="EMBL-CDS" id="AAN41705"/>
    </conflict>
    <text>Truncated C-terminus.</text>
</comment>
<comment type="sequence caution" evidence="2">
    <conflict type="erroneous termination">
        <sequence resource="EMBL" id="AE014073"/>
    </conflict>
    <text>Truncated C-terminus.</text>
</comment>